<proteinExistence type="inferred from homology"/>
<reference key="1">
    <citation type="journal article" date="2001" name="Science">
        <title>Comparative genomics of Listeria species.</title>
        <authorList>
            <person name="Glaser P."/>
            <person name="Frangeul L."/>
            <person name="Buchrieser C."/>
            <person name="Rusniok C."/>
            <person name="Amend A."/>
            <person name="Baquero F."/>
            <person name="Berche P."/>
            <person name="Bloecker H."/>
            <person name="Brandt P."/>
            <person name="Chakraborty T."/>
            <person name="Charbit A."/>
            <person name="Chetouani F."/>
            <person name="Couve E."/>
            <person name="de Daruvar A."/>
            <person name="Dehoux P."/>
            <person name="Domann E."/>
            <person name="Dominguez-Bernal G."/>
            <person name="Duchaud E."/>
            <person name="Durant L."/>
            <person name="Dussurget O."/>
            <person name="Entian K.-D."/>
            <person name="Fsihi H."/>
            <person name="Garcia-del Portillo F."/>
            <person name="Garrido P."/>
            <person name="Gautier L."/>
            <person name="Goebel W."/>
            <person name="Gomez-Lopez N."/>
            <person name="Hain T."/>
            <person name="Hauf J."/>
            <person name="Jackson D."/>
            <person name="Jones L.-M."/>
            <person name="Kaerst U."/>
            <person name="Kreft J."/>
            <person name="Kuhn M."/>
            <person name="Kunst F."/>
            <person name="Kurapkat G."/>
            <person name="Madueno E."/>
            <person name="Maitournam A."/>
            <person name="Mata Vicente J."/>
            <person name="Ng E."/>
            <person name="Nedjari H."/>
            <person name="Nordsiek G."/>
            <person name="Novella S."/>
            <person name="de Pablos B."/>
            <person name="Perez-Diaz J.-C."/>
            <person name="Purcell R."/>
            <person name="Remmel B."/>
            <person name="Rose M."/>
            <person name="Schlueter T."/>
            <person name="Simoes N."/>
            <person name="Tierrez A."/>
            <person name="Vazquez-Boland J.-A."/>
            <person name="Voss H."/>
            <person name="Wehland J."/>
            <person name="Cossart P."/>
        </authorList>
    </citation>
    <scope>NUCLEOTIDE SEQUENCE [LARGE SCALE GENOMIC DNA]</scope>
    <source>
        <strain>ATCC BAA-679 / EGD-e</strain>
    </source>
</reference>
<sequence length="157" mass="17030">MIRIGQGYDVHKLAYDRDLIIGGVKIPYEKGLLGHSDADVLLHAITDAIIGAIGAGDIGHFFPDTDMVFKDADSAELLAEIWQKVEADGFRLGNLDATIIAEKPKMAPYVEQMKLRIAELLHADSAQVNVKATTTEKLGFTGREEGIASLAVVLLEK</sequence>
<name>ISPF_LISMO</name>
<keyword id="KW-0414">Isoprene biosynthesis</keyword>
<keyword id="KW-0456">Lyase</keyword>
<keyword id="KW-0479">Metal-binding</keyword>
<keyword id="KW-1185">Reference proteome</keyword>
<gene>
    <name evidence="1" type="primary">ispF</name>
    <name type="ordered locus">lmo0236</name>
</gene>
<dbReference type="EC" id="4.6.1.12" evidence="1"/>
<dbReference type="EMBL" id="AL591974">
    <property type="protein sequence ID" value="CAD00763.1"/>
    <property type="molecule type" value="Genomic_DNA"/>
</dbReference>
<dbReference type="PIR" id="AE1104">
    <property type="entry name" value="AE1104"/>
</dbReference>
<dbReference type="RefSeq" id="NP_463767.1">
    <property type="nucleotide sequence ID" value="NC_003210.1"/>
</dbReference>
<dbReference type="RefSeq" id="WP_009930888.1">
    <property type="nucleotide sequence ID" value="NZ_CP149495.1"/>
</dbReference>
<dbReference type="SMR" id="Q8YAB4"/>
<dbReference type="STRING" id="169963.gene:17592887"/>
<dbReference type="PaxDb" id="169963-lmo0236"/>
<dbReference type="EnsemblBacteria" id="CAD00763">
    <property type="protein sequence ID" value="CAD00763"/>
    <property type="gene ID" value="CAD00763"/>
</dbReference>
<dbReference type="GeneID" id="987228"/>
<dbReference type="KEGG" id="lmo:lmo0236"/>
<dbReference type="PATRIC" id="fig|169963.11.peg.244"/>
<dbReference type="eggNOG" id="COG0245">
    <property type="taxonomic scope" value="Bacteria"/>
</dbReference>
<dbReference type="HOGENOM" id="CLU_084630_2_0_9"/>
<dbReference type="OrthoDB" id="9804336at2"/>
<dbReference type="PhylomeDB" id="Q8YAB4"/>
<dbReference type="BioCyc" id="LMON169963:LMO0236-MONOMER"/>
<dbReference type="UniPathway" id="UPA00056">
    <property type="reaction ID" value="UER00095"/>
</dbReference>
<dbReference type="Proteomes" id="UP000000817">
    <property type="component" value="Chromosome"/>
</dbReference>
<dbReference type="GO" id="GO:0008685">
    <property type="term" value="F:2-C-methyl-D-erythritol 2,4-cyclodiphosphate synthase activity"/>
    <property type="evidence" value="ECO:0000318"/>
    <property type="project" value="GO_Central"/>
</dbReference>
<dbReference type="GO" id="GO:0046872">
    <property type="term" value="F:metal ion binding"/>
    <property type="evidence" value="ECO:0007669"/>
    <property type="project" value="UniProtKB-KW"/>
</dbReference>
<dbReference type="GO" id="GO:0019288">
    <property type="term" value="P:isopentenyl diphosphate biosynthetic process, methylerythritol 4-phosphate pathway"/>
    <property type="evidence" value="ECO:0007669"/>
    <property type="project" value="UniProtKB-UniRule"/>
</dbReference>
<dbReference type="GO" id="GO:0016114">
    <property type="term" value="P:terpenoid biosynthetic process"/>
    <property type="evidence" value="ECO:0007669"/>
    <property type="project" value="InterPro"/>
</dbReference>
<dbReference type="CDD" id="cd00554">
    <property type="entry name" value="MECDP_synthase"/>
    <property type="match status" value="1"/>
</dbReference>
<dbReference type="FunFam" id="3.30.1330.50:FF:000001">
    <property type="entry name" value="2-C-methyl-D-erythritol 2,4-cyclodiphosphate synthase"/>
    <property type="match status" value="1"/>
</dbReference>
<dbReference type="Gene3D" id="3.30.1330.50">
    <property type="entry name" value="2-C-methyl-D-erythritol 2,4-cyclodiphosphate synthase"/>
    <property type="match status" value="1"/>
</dbReference>
<dbReference type="HAMAP" id="MF_00107">
    <property type="entry name" value="IspF"/>
    <property type="match status" value="1"/>
</dbReference>
<dbReference type="InterPro" id="IPR003526">
    <property type="entry name" value="MECDP_synthase"/>
</dbReference>
<dbReference type="InterPro" id="IPR020555">
    <property type="entry name" value="MECDP_synthase_CS"/>
</dbReference>
<dbReference type="InterPro" id="IPR036571">
    <property type="entry name" value="MECDP_synthase_sf"/>
</dbReference>
<dbReference type="NCBIfam" id="TIGR00151">
    <property type="entry name" value="ispF"/>
    <property type="match status" value="1"/>
</dbReference>
<dbReference type="PANTHER" id="PTHR43181">
    <property type="entry name" value="2-C-METHYL-D-ERYTHRITOL 2,4-CYCLODIPHOSPHATE SYNTHASE, CHLOROPLASTIC"/>
    <property type="match status" value="1"/>
</dbReference>
<dbReference type="PANTHER" id="PTHR43181:SF1">
    <property type="entry name" value="2-C-METHYL-D-ERYTHRITOL 2,4-CYCLODIPHOSPHATE SYNTHASE, CHLOROPLASTIC"/>
    <property type="match status" value="1"/>
</dbReference>
<dbReference type="Pfam" id="PF02542">
    <property type="entry name" value="YgbB"/>
    <property type="match status" value="1"/>
</dbReference>
<dbReference type="SUPFAM" id="SSF69765">
    <property type="entry name" value="IpsF-like"/>
    <property type="match status" value="1"/>
</dbReference>
<dbReference type="PROSITE" id="PS01350">
    <property type="entry name" value="ISPF"/>
    <property type="match status" value="1"/>
</dbReference>
<accession>Q8YAB4</accession>
<feature type="chain" id="PRO_0000189478" description="2-C-methyl-D-erythritol 2,4-cyclodiphosphate synthase">
    <location>
        <begin position="1"/>
        <end position="157"/>
    </location>
</feature>
<feature type="binding site" evidence="1">
    <location>
        <begin position="9"/>
        <end position="11"/>
    </location>
    <ligand>
        <name>4-CDP-2-C-methyl-D-erythritol 2-phosphate</name>
        <dbReference type="ChEBI" id="CHEBI:57919"/>
    </ligand>
</feature>
<feature type="binding site" evidence="1">
    <location>
        <position position="9"/>
    </location>
    <ligand>
        <name>a divalent metal cation</name>
        <dbReference type="ChEBI" id="CHEBI:60240"/>
    </ligand>
</feature>
<feature type="binding site" evidence="1">
    <location>
        <position position="11"/>
    </location>
    <ligand>
        <name>a divalent metal cation</name>
        <dbReference type="ChEBI" id="CHEBI:60240"/>
    </ligand>
</feature>
<feature type="binding site" evidence="1">
    <location>
        <begin position="35"/>
        <end position="36"/>
    </location>
    <ligand>
        <name>4-CDP-2-C-methyl-D-erythritol 2-phosphate</name>
        <dbReference type="ChEBI" id="CHEBI:57919"/>
    </ligand>
</feature>
<feature type="binding site" evidence="1">
    <location>
        <position position="43"/>
    </location>
    <ligand>
        <name>a divalent metal cation</name>
        <dbReference type="ChEBI" id="CHEBI:60240"/>
    </ligand>
</feature>
<feature type="binding site" evidence="1">
    <location>
        <begin position="57"/>
        <end position="59"/>
    </location>
    <ligand>
        <name>4-CDP-2-C-methyl-D-erythritol 2-phosphate</name>
        <dbReference type="ChEBI" id="CHEBI:57919"/>
    </ligand>
</feature>
<feature type="binding site" evidence="1">
    <location>
        <begin position="62"/>
        <end position="66"/>
    </location>
    <ligand>
        <name>4-CDP-2-C-methyl-D-erythritol 2-phosphate</name>
        <dbReference type="ChEBI" id="CHEBI:57919"/>
    </ligand>
</feature>
<feature type="binding site" evidence="1">
    <location>
        <begin position="101"/>
        <end position="107"/>
    </location>
    <ligand>
        <name>4-CDP-2-C-methyl-D-erythritol 2-phosphate</name>
        <dbReference type="ChEBI" id="CHEBI:57919"/>
    </ligand>
</feature>
<feature type="binding site" evidence="1">
    <location>
        <begin position="133"/>
        <end position="136"/>
    </location>
    <ligand>
        <name>4-CDP-2-C-methyl-D-erythritol 2-phosphate</name>
        <dbReference type="ChEBI" id="CHEBI:57919"/>
    </ligand>
</feature>
<feature type="binding site" evidence="1">
    <location>
        <position position="140"/>
    </location>
    <ligand>
        <name>4-CDP-2-C-methyl-D-erythritol 2-phosphate</name>
        <dbReference type="ChEBI" id="CHEBI:57919"/>
    </ligand>
</feature>
<feature type="binding site" evidence="1">
    <location>
        <position position="143"/>
    </location>
    <ligand>
        <name>4-CDP-2-C-methyl-D-erythritol 2-phosphate</name>
        <dbReference type="ChEBI" id="CHEBI:57919"/>
    </ligand>
</feature>
<feature type="site" description="Transition state stabilizer" evidence="1">
    <location>
        <position position="35"/>
    </location>
</feature>
<feature type="site" description="Transition state stabilizer" evidence="1">
    <location>
        <position position="134"/>
    </location>
</feature>
<organism>
    <name type="scientific">Listeria monocytogenes serovar 1/2a (strain ATCC BAA-679 / EGD-e)</name>
    <dbReference type="NCBI Taxonomy" id="169963"/>
    <lineage>
        <taxon>Bacteria</taxon>
        <taxon>Bacillati</taxon>
        <taxon>Bacillota</taxon>
        <taxon>Bacilli</taxon>
        <taxon>Bacillales</taxon>
        <taxon>Listeriaceae</taxon>
        <taxon>Listeria</taxon>
    </lineage>
</organism>
<comment type="function">
    <text evidence="1">Involved in the biosynthesis of isopentenyl diphosphate (IPP) and dimethylallyl diphosphate (DMAPP), two major building blocks of isoprenoid compounds. Catalyzes the conversion of 4-diphosphocytidyl-2-C-methyl-D-erythritol 2-phosphate (CDP-ME2P) to 2-C-methyl-D-erythritol 2,4-cyclodiphosphate (ME-CPP) with a corresponding release of cytidine 5-monophosphate (CMP).</text>
</comment>
<comment type="catalytic activity">
    <reaction evidence="1">
        <text>4-CDP-2-C-methyl-D-erythritol 2-phosphate = 2-C-methyl-D-erythritol 2,4-cyclic diphosphate + CMP</text>
        <dbReference type="Rhea" id="RHEA:23864"/>
        <dbReference type="ChEBI" id="CHEBI:57919"/>
        <dbReference type="ChEBI" id="CHEBI:58483"/>
        <dbReference type="ChEBI" id="CHEBI:60377"/>
        <dbReference type="EC" id="4.6.1.12"/>
    </reaction>
</comment>
<comment type="cofactor">
    <cofactor evidence="1">
        <name>a divalent metal cation</name>
        <dbReference type="ChEBI" id="CHEBI:60240"/>
    </cofactor>
    <text evidence="1">Binds 1 divalent metal cation per subunit.</text>
</comment>
<comment type="pathway">
    <text evidence="1">Isoprenoid biosynthesis; isopentenyl diphosphate biosynthesis via DXP pathway; isopentenyl diphosphate from 1-deoxy-D-xylulose 5-phosphate: step 4/6.</text>
</comment>
<comment type="subunit">
    <text evidence="1">Homotrimer.</text>
</comment>
<comment type="similarity">
    <text evidence="1">Belongs to the IspF family.</text>
</comment>
<protein>
    <recommendedName>
        <fullName evidence="1">2-C-methyl-D-erythritol 2,4-cyclodiphosphate synthase</fullName>
        <shortName evidence="1">MECDP-synthase</shortName>
        <shortName evidence="1">MECPP-synthase</shortName>
        <shortName evidence="1">MECPS</shortName>
        <ecNumber evidence="1">4.6.1.12</ecNumber>
    </recommendedName>
</protein>
<evidence type="ECO:0000255" key="1">
    <source>
        <dbReference type="HAMAP-Rule" id="MF_00107"/>
    </source>
</evidence>